<name>IOVO_TRABL</name>
<reference key="1">
    <citation type="journal article" date="1987" name="Biochemistry">
        <title>Ovomucoid third domains from 100 avian species: isolation, sequences, and hypervariability of enzyme-inhibitor contact residues.</title>
        <authorList>
            <person name="Laskowski M. Jr."/>
            <person name="Kato I."/>
            <person name="Ardelt W."/>
            <person name="Cook J."/>
            <person name="Denton A."/>
            <person name="Empie M.W."/>
            <person name="Kohr W.J."/>
            <person name="Park S.J."/>
            <person name="Parks K."/>
            <person name="Schatzley B.L."/>
            <person name="Schoenberger O.L."/>
            <person name="Tashiro M."/>
            <person name="Vichot G."/>
            <person name="Whatley H.E."/>
            <person name="Wieczorek A."/>
            <person name="Wieczorek M."/>
        </authorList>
    </citation>
    <scope>PROTEIN SEQUENCE</scope>
</reference>
<reference key="2">
    <citation type="journal article" date="1993" name="J. Protein Chem.">
        <title>Amino acid sequences of ovomucoid third domains from 27 additional species of birds.</title>
        <authorList>
            <person name="Apostol I."/>
            <person name="Giletto A."/>
            <person name="Komiyama T."/>
            <person name="Zhang W."/>
            <person name="Laskowski M. Jr."/>
        </authorList>
    </citation>
    <scope>PROTEIN SEQUENCE</scope>
</reference>
<feature type="chain" id="PRO_0000073187" description="Ovomucoid">
    <location>
        <begin position="1" status="less than"/>
        <end position="56" status="greater than"/>
    </location>
</feature>
<feature type="domain" description="Kazal-like" evidence="1">
    <location>
        <begin position="6"/>
        <end position="56"/>
    </location>
</feature>
<feature type="site" description="Reactive bond 3">
    <location>
        <begin position="18"/>
        <end position="19"/>
    </location>
</feature>
<feature type="glycosylation site" description="N-linked (GlcNAc...) asparagine">
    <location>
        <position position="45"/>
    </location>
</feature>
<feature type="disulfide bond">
    <location>
        <begin position="8"/>
        <end position="38"/>
    </location>
</feature>
<feature type="disulfide bond">
    <location>
        <begin position="16"/>
        <end position="35"/>
    </location>
</feature>
<feature type="disulfide bond">
    <location>
        <begin position="24"/>
        <end position="56"/>
    </location>
</feature>
<feature type="non-terminal residue">
    <location>
        <position position="1"/>
    </location>
</feature>
<feature type="non-terminal residue">
    <location>
        <position position="56"/>
    </location>
</feature>
<comment type="subcellular location">
    <subcellularLocation>
        <location>Secreted</location>
    </subcellularLocation>
</comment>
<comment type="domain">
    <text>Avian ovomucoid consists of three homologous, tandem Kazal family inhibitory domains.</text>
</comment>
<proteinExistence type="evidence at protein level"/>
<protein>
    <recommendedName>
        <fullName>Ovomucoid</fullName>
    </recommendedName>
</protein>
<accession>P67946</accession>
<accession>P05586</accession>
<evidence type="ECO:0000255" key="1">
    <source>
        <dbReference type="PROSITE-ProRule" id="PRU00798"/>
    </source>
</evidence>
<sequence>LAAVSVDCSEYPKPACTMEYRPLCGSDNKTYGNKCNFCNAVVESNGTLTLSHFGKC</sequence>
<keyword id="KW-0903">Direct protein sequencing</keyword>
<keyword id="KW-1015">Disulfide bond</keyword>
<keyword id="KW-0325">Glycoprotein</keyword>
<keyword id="KW-0646">Protease inhibitor</keyword>
<keyword id="KW-0677">Repeat</keyword>
<keyword id="KW-0964">Secreted</keyword>
<keyword id="KW-0722">Serine protease inhibitor</keyword>
<organism>
    <name type="scientific">Tragopan blythii</name>
    <name type="common">Blyth's tragopan pheasant</name>
    <dbReference type="NCBI Taxonomy" id="30406"/>
    <lineage>
        <taxon>Eukaryota</taxon>
        <taxon>Metazoa</taxon>
        <taxon>Chordata</taxon>
        <taxon>Craniata</taxon>
        <taxon>Vertebrata</taxon>
        <taxon>Euteleostomi</taxon>
        <taxon>Archelosauria</taxon>
        <taxon>Archosauria</taxon>
        <taxon>Dinosauria</taxon>
        <taxon>Saurischia</taxon>
        <taxon>Theropoda</taxon>
        <taxon>Coelurosauria</taxon>
        <taxon>Aves</taxon>
        <taxon>Neognathae</taxon>
        <taxon>Galloanserae</taxon>
        <taxon>Galliformes</taxon>
        <taxon>Phasianidae</taxon>
        <taxon>Phasianinae</taxon>
        <taxon>Tragopan</taxon>
    </lineage>
</organism>
<dbReference type="PIR" id="D61588">
    <property type="entry name" value="D61588"/>
</dbReference>
<dbReference type="SMR" id="P67946"/>
<dbReference type="GO" id="GO:0005615">
    <property type="term" value="C:extracellular space"/>
    <property type="evidence" value="ECO:0007669"/>
    <property type="project" value="UniProtKB-ARBA"/>
</dbReference>
<dbReference type="GO" id="GO:0004867">
    <property type="term" value="F:serine-type endopeptidase inhibitor activity"/>
    <property type="evidence" value="ECO:0007669"/>
    <property type="project" value="UniProtKB-KW"/>
</dbReference>
<dbReference type="CDD" id="cd00104">
    <property type="entry name" value="KAZAL_FS"/>
    <property type="match status" value="1"/>
</dbReference>
<dbReference type="FunFam" id="3.30.60.30:FF:000037">
    <property type="entry name" value="Ovomucoid"/>
    <property type="match status" value="1"/>
</dbReference>
<dbReference type="Gene3D" id="3.30.60.30">
    <property type="match status" value="1"/>
</dbReference>
<dbReference type="InterPro" id="IPR051597">
    <property type="entry name" value="Bifunctional_prot_inhibitor"/>
</dbReference>
<dbReference type="InterPro" id="IPR002350">
    <property type="entry name" value="Kazal_dom"/>
</dbReference>
<dbReference type="InterPro" id="IPR036058">
    <property type="entry name" value="Kazal_dom_sf"/>
</dbReference>
<dbReference type="InterPro" id="IPR001239">
    <property type="entry name" value="Prot_inh_Kazal-m"/>
</dbReference>
<dbReference type="PANTHER" id="PTHR47729:SF1">
    <property type="entry name" value="OVOMUCOID-LIKE-RELATED"/>
    <property type="match status" value="1"/>
</dbReference>
<dbReference type="PANTHER" id="PTHR47729">
    <property type="entry name" value="SERINE PEPTIDASE INHIBITOR, KAZAL TYPE 2, TANDEM DUPLICATE 1-RELATED"/>
    <property type="match status" value="1"/>
</dbReference>
<dbReference type="Pfam" id="PF00050">
    <property type="entry name" value="Kazal_1"/>
    <property type="match status" value="1"/>
</dbReference>
<dbReference type="PRINTS" id="PR00290">
    <property type="entry name" value="KAZALINHBTR"/>
</dbReference>
<dbReference type="SMART" id="SM00280">
    <property type="entry name" value="KAZAL"/>
    <property type="match status" value="1"/>
</dbReference>
<dbReference type="SUPFAM" id="SSF100895">
    <property type="entry name" value="Kazal-type serine protease inhibitors"/>
    <property type="match status" value="1"/>
</dbReference>
<dbReference type="PROSITE" id="PS00282">
    <property type="entry name" value="KAZAL_1"/>
    <property type="match status" value="1"/>
</dbReference>
<dbReference type="PROSITE" id="PS51465">
    <property type="entry name" value="KAZAL_2"/>
    <property type="match status" value="1"/>
</dbReference>